<feature type="chain" id="PRO_0000126419" description="Small ribosomal subunit protein uS8">
    <location>
        <begin position="1"/>
        <end position="131"/>
    </location>
</feature>
<comment type="function">
    <text evidence="1">One of the primary rRNA binding proteins, it binds directly to 16S rRNA central domain where it helps coordinate assembly of the platform of the 30S subunit.</text>
</comment>
<comment type="subunit">
    <text evidence="1">Part of the 30S ribosomal subunit. Contacts proteins S5 and S12.</text>
</comment>
<comment type="similarity">
    <text evidence="1">Belongs to the universal ribosomal protein uS8 family.</text>
</comment>
<organism>
    <name type="scientific">Helicobacter pylori (strain ATCC 700392 / 26695)</name>
    <name type="common">Campylobacter pylori</name>
    <dbReference type="NCBI Taxonomy" id="85962"/>
    <lineage>
        <taxon>Bacteria</taxon>
        <taxon>Pseudomonadati</taxon>
        <taxon>Campylobacterota</taxon>
        <taxon>Epsilonproteobacteria</taxon>
        <taxon>Campylobacterales</taxon>
        <taxon>Helicobacteraceae</taxon>
        <taxon>Helicobacter</taxon>
    </lineage>
</organism>
<dbReference type="EMBL" id="AE000511">
    <property type="protein sequence ID" value="AAD08346.1"/>
    <property type="molecule type" value="Genomic_DNA"/>
</dbReference>
<dbReference type="PIR" id="A64683">
    <property type="entry name" value="A64683"/>
</dbReference>
<dbReference type="RefSeq" id="NP_208097.1">
    <property type="nucleotide sequence ID" value="NC_000915.1"/>
</dbReference>
<dbReference type="RefSeq" id="WP_000245805.1">
    <property type="nucleotide sequence ID" value="NC_018939.1"/>
</dbReference>
<dbReference type="SMR" id="P66621"/>
<dbReference type="FunCoup" id="P66621">
    <property type="interactions" value="367"/>
</dbReference>
<dbReference type="STRING" id="85962.HP_1305"/>
<dbReference type="PaxDb" id="85962-C694_06740"/>
<dbReference type="EnsemblBacteria" id="AAD08346">
    <property type="protein sequence ID" value="AAD08346"/>
    <property type="gene ID" value="HP_1305"/>
</dbReference>
<dbReference type="GeneID" id="93237564"/>
<dbReference type="KEGG" id="heo:C694_06740"/>
<dbReference type="KEGG" id="hpy:HP_1305"/>
<dbReference type="PATRIC" id="fig|85962.47.peg.1399"/>
<dbReference type="eggNOG" id="COG0096">
    <property type="taxonomic scope" value="Bacteria"/>
</dbReference>
<dbReference type="InParanoid" id="P66621"/>
<dbReference type="OrthoDB" id="9802617at2"/>
<dbReference type="PhylomeDB" id="P66621"/>
<dbReference type="Proteomes" id="UP000000429">
    <property type="component" value="Chromosome"/>
</dbReference>
<dbReference type="GO" id="GO:0022627">
    <property type="term" value="C:cytosolic small ribosomal subunit"/>
    <property type="evidence" value="ECO:0000318"/>
    <property type="project" value="GO_Central"/>
</dbReference>
<dbReference type="GO" id="GO:0019843">
    <property type="term" value="F:rRNA binding"/>
    <property type="evidence" value="ECO:0007669"/>
    <property type="project" value="UniProtKB-UniRule"/>
</dbReference>
<dbReference type="GO" id="GO:0003735">
    <property type="term" value="F:structural constituent of ribosome"/>
    <property type="evidence" value="ECO:0000318"/>
    <property type="project" value="GO_Central"/>
</dbReference>
<dbReference type="GO" id="GO:0006412">
    <property type="term" value="P:translation"/>
    <property type="evidence" value="ECO:0007669"/>
    <property type="project" value="UniProtKB-UniRule"/>
</dbReference>
<dbReference type="FunFam" id="3.30.1370.30:FF:000002">
    <property type="entry name" value="30S ribosomal protein S8"/>
    <property type="match status" value="1"/>
</dbReference>
<dbReference type="FunFam" id="3.30.1490.10:FF:000001">
    <property type="entry name" value="30S ribosomal protein S8"/>
    <property type="match status" value="1"/>
</dbReference>
<dbReference type="Gene3D" id="3.30.1370.30">
    <property type="match status" value="1"/>
</dbReference>
<dbReference type="Gene3D" id="3.30.1490.10">
    <property type="match status" value="1"/>
</dbReference>
<dbReference type="HAMAP" id="MF_01302_B">
    <property type="entry name" value="Ribosomal_uS8_B"/>
    <property type="match status" value="1"/>
</dbReference>
<dbReference type="InterPro" id="IPR000630">
    <property type="entry name" value="Ribosomal_uS8"/>
</dbReference>
<dbReference type="InterPro" id="IPR047863">
    <property type="entry name" value="Ribosomal_uS8_CS"/>
</dbReference>
<dbReference type="InterPro" id="IPR035987">
    <property type="entry name" value="Ribosomal_uS8_sf"/>
</dbReference>
<dbReference type="NCBIfam" id="NF001109">
    <property type="entry name" value="PRK00136.1"/>
    <property type="match status" value="1"/>
</dbReference>
<dbReference type="PANTHER" id="PTHR11758">
    <property type="entry name" value="40S RIBOSOMAL PROTEIN S15A"/>
    <property type="match status" value="1"/>
</dbReference>
<dbReference type="Pfam" id="PF00410">
    <property type="entry name" value="Ribosomal_S8"/>
    <property type="match status" value="1"/>
</dbReference>
<dbReference type="SUPFAM" id="SSF56047">
    <property type="entry name" value="Ribosomal protein S8"/>
    <property type="match status" value="1"/>
</dbReference>
<dbReference type="PROSITE" id="PS00053">
    <property type="entry name" value="RIBOSOMAL_S8"/>
    <property type="match status" value="1"/>
</dbReference>
<keyword id="KW-1185">Reference proteome</keyword>
<keyword id="KW-0687">Ribonucleoprotein</keyword>
<keyword id="KW-0689">Ribosomal protein</keyword>
<keyword id="KW-0694">RNA-binding</keyword>
<keyword id="KW-0699">rRNA-binding</keyword>
<name>RS8_HELPY</name>
<gene>
    <name evidence="1" type="primary">rpsH</name>
    <name type="ordered locus">HP_1305</name>
</gene>
<sequence>MVNDIIADSLTRLRNASMRRLEFTQLYYAKIVVSILEIFKEKGFIKDFNVKDKDKKQSVYVQLAYDEKGHSKISEVKRLSKPGRRVYKQKNELKRFKNGYGVIVVSTSKGVITNEEAYRQNVGGEVLCSIW</sequence>
<reference key="1">
    <citation type="journal article" date="1997" name="Nature">
        <title>The complete genome sequence of the gastric pathogen Helicobacter pylori.</title>
        <authorList>
            <person name="Tomb J.-F."/>
            <person name="White O."/>
            <person name="Kerlavage A.R."/>
            <person name="Clayton R.A."/>
            <person name="Sutton G.G."/>
            <person name="Fleischmann R.D."/>
            <person name="Ketchum K.A."/>
            <person name="Klenk H.-P."/>
            <person name="Gill S.R."/>
            <person name="Dougherty B.A."/>
            <person name="Nelson K.E."/>
            <person name="Quackenbush J."/>
            <person name="Zhou L."/>
            <person name="Kirkness E.F."/>
            <person name="Peterson S.N."/>
            <person name="Loftus B.J."/>
            <person name="Richardson D.L."/>
            <person name="Dodson R.J."/>
            <person name="Khalak H.G."/>
            <person name="Glodek A."/>
            <person name="McKenney K."/>
            <person name="FitzGerald L.M."/>
            <person name="Lee N."/>
            <person name="Adams M.D."/>
            <person name="Hickey E.K."/>
            <person name="Berg D.E."/>
            <person name="Gocayne J.D."/>
            <person name="Utterback T.R."/>
            <person name="Peterson J.D."/>
            <person name="Kelley J.M."/>
            <person name="Cotton M.D."/>
            <person name="Weidman J.F."/>
            <person name="Fujii C."/>
            <person name="Bowman C."/>
            <person name="Watthey L."/>
            <person name="Wallin E."/>
            <person name="Hayes W.S."/>
            <person name="Borodovsky M."/>
            <person name="Karp P.D."/>
            <person name="Smith H.O."/>
            <person name="Fraser C.M."/>
            <person name="Venter J.C."/>
        </authorList>
    </citation>
    <scope>NUCLEOTIDE SEQUENCE [LARGE SCALE GENOMIC DNA]</scope>
    <source>
        <strain>ATCC 700392 / 26695</strain>
    </source>
</reference>
<evidence type="ECO:0000255" key="1">
    <source>
        <dbReference type="HAMAP-Rule" id="MF_01302"/>
    </source>
</evidence>
<evidence type="ECO:0000305" key="2"/>
<proteinExistence type="inferred from homology"/>
<accession>P66621</accession>
<accession>P56015</accession>
<protein>
    <recommendedName>
        <fullName evidence="1">Small ribosomal subunit protein uS8</fullName>
    </recommendedName>
    <alternativeName>
        <fullName evidence="2">30S ribosomal protein S8</fullName>
    </alternativeName>
</protein>